<organism>
    <name type="scientific">Homo sapiens</name>
    <name type="common">Human</name>
    <dbReference type="NCBI Taxonomy" id="9606"/>
    <lineage>
        <taxon>Eukaryota</taxon>
        <taxon>Metazoa</taxon>
        <taxon>Chordata</taxon>
        <taxon>Craniata</taxon>
        <taxon>Vertebrata</taxon>
        <taxon>Euteleostomi</taxon>
        <taxon>Mammalia</taxon>
        <taxon>Eutheria</taxon>
        <taxon>Euarchontoglires</taxon>
        <taxon>Primates</taxon>
        <taxon>Haplorrhini</taxon>
        <taxon>Catarrhini</taxon>
        <taxon>Hominidae</taxon>
        <taxon>Homo</taxon>
    </lineage>
</organism>
<comment type="function">
    <text evidence="1">Probable lipase.</text>
</comment>
<comment type="interaction">
    <interactant intactId="EBI-12379171">
        <id>Q2TAA2</id>
    </interactant>
    <interactant intactId="EBI-12379171">
        <id>Q2TAA2</id>
        <label>IAH1</label>
    </interactant>
    <organismsDiffer>false</organismsDiffer>
    <experiments>5</experiments>
</comment>
<comment type="alternative products">
    <event type="alternative splicing"/>
    <isoform>
        <id>Q2TAA2-1</id>
        <name>1</name>
        <sequence type="displayed"/>
    </isoform>
    <isoform>
        <id>Q2TAA2-2</id>
        <name>2</name>
        <sequence type="described" ref="VSP_056571"/>
    </isoform>
</comment>
<comment type="similarity">
    <text evidence="5">Belongs to the 'GDSL' lipolytic enzyme family. IAH1 subfamily.</text>
</comment>
<evidence type="ECO:0000250" key="1"/>
<evidence type="ECO:0000250" key="2">
    <source>
        <dbReference type="UniProtKB" id="P41734"/>
    </source>
</evidence>
<evidence type="ECO:0000250" key="3">
    <source>
        <dbReference type="UniProtKB" id="Q9DB29"/>
    </source>
</evidence>
<evidence type="ECO:0000303" key="4">
    <source>
    </source>
</evidence>
<evidence type="ECO:0000305" key="5"/>
<feature type="chain" id="PRO_0000315723" description="Isoamyl acetate-hydrolyzing esterase 1 homolog">
    <location>
        <begin position="1"/>
        <end position="248"/>
    </location>
</feature>
<feature type="active site" description="Nucleophile" evidence="2">
    <location>
        <position position="24"/>
    </location>
</feature>
<feature type="active site" description="Proton donor" evidence="2">
    <location>
        <position position="196"/>
    </location>
</feature>
<feature type="active site" description="Proton acceptor" evidence="2">
    <location>
        <position position="199"/>
    </location>
</feature>
<feature type="site" description="Transition state stabilizer" evidence="2">
    <location>
        <position position="56"/>
    </location>
</feature>
<feature type="site" description="Transition state stabilizer" evidence="2">
    <location>
        <position position="89"/>
    </location>
</feature>
<feature type="modified residue" description="N6-succinyllysine" evidence="3">
    <location>
        <position position="63"/>
    </location>
</feature>
<feature type="splice variant" id="VSP_056571" description="In isoform 2." evidence="4">
    <location>
        <begin position="1"/>
        <end position="113"/>
    </location>
</feature>
<name>IAH1_HUMAN</name>
<gene>
    <name type="primary">IAH1</name>
</gene>
<accession>Q2TAA2</accession>
<accession>B4DMV3</accession>
<sequence>MALCEAAGCGSALLWPRLLLFGDSITQFSFQQGGWGASLADRLVRKCDVLNRGFSGYNTRWAKIILPRLIRKGNSLDIPVAVTIFFGANDSALKDENPKQHIPLEEYAANLKSMVQYLKSVDIPENRVILITPTPLCETAWEEQCIIQGCKLNRLNSVVGEYANACLQVAQDCGTDVLDLWTLMQDSQDFSSYLSDGLHLSPKGNEFLFSHLWPLIEKKVSSLPLLLPYWRDVAEAKPELSLLGDGDH</sequence>
<keyword id="KW-0025">Alternative splicing</keyword>
<keyword id="KW-0378">Hydrolase</keyword>
<keyword id="KW-0442">Lipid degradation</keyword>
<keyword id="KW-0443">Lipid metabolism</keyword>
<keyword id="KW-1267">Proteomics identification</keyword>
<keyword id="KW-1185">Reference proteome</keyword>
<protein>
    <recommendedName>
        <fullName>Isoamyl acetate-hydrolyzing esterase 1 homolog</fullName>
        <ecNumber>3.1.-.-</ecNumber>
    </recommendedName>
</protein>
<dbReference type="EC" id="3.1.-.-"/>
<dbReference type="EMBL" id="AK291984">
    <property type="protein sequence ID" value="BAF84673.1"/>
    <property type="molecule type" value="mRNA"/>
</dbReference>
<dbReference type="EMBL" id="AK297648">
    <property type="protein sequence ID" value="BAG60015.1"/>
    <property type="molecule type" value="mRNA"/>
</dbReference>
<dbReference type="EMBL" id="AC080162">
    <property type="status" value="NOT_ANNOTATED_CDS"/>
    <property type="molecule type" value="Genomic_DNA"/>
</dbReference>
<dbReference type="EMBL" id="CH471053">
    <property type="protein sequence ID" value="EAX00983.1"/>
    <property type="molecule type" value="Genomic_DNA"/>
</dbReference>
<dbReference type="EMBL" id="CH471053">
    <property type="protein sequence ID" value="EAX00984.1"/>
    <property type="molecule type" value="Genomic_DNA"/>
</dbReference>
<dbReference type="EMBL" id="CH471053">
    <property type="protein sequence ID" value="EAX00985.1"/>
    <property type="molecule type" value="Genomic_DNA"/>
</dbReference>
<dbReference type="EMBL" id="CH471053">
    <property type="protein sequence ID" value="EAX00988.1"/>
    <property type="molecule type" value="Genomic_DNA"/>
</dbReference>
<dbReference type="EMBL" id="BC111025">
    <property type="protein sequence ID" value="AAI11026.1"/>
    <property type="molecule type" value="mRNA"/>
</dbReference>
<dbReference type="CCDS" id="CCDS42651.1">
    <molecule id="Q2TAA2-1"/>
</dbReference>
<dbReference type="CCDS" id="CCDS82418.1">
    <molecule id="Q2TAA2-2"/>
</dbReference>
<dbReference type="RefSeq" id="NP_001034702.1">
    <molecule id="Q2TAA2-1"/>
    <property type="nucleotide sequence ID" value="NM_001039613.3"/>
</dbReference>
<dbReference type="RefSeq" id="NP_001307787.1">
    <property type="nucleotide sequence ID" value="NM_001320858.1"/>
</dbReference>
<dbReference type="RefSeq" id="NP_001307788.1">
    <molecule id="Q2TAA2-2"/>
    <property type="nucleotide sequence ID" value="NM_001320859.2"/>
</dbReference>
<dbReference type="RefSeq" id="NP_001307789.1">
    <molecule id="Q2TAA2-2"/>
    <property type="nucleotide sequence ID" value="NM_001320860.2"/>
</dbReference>
<dbReference type="RefSeq" id="NP_001307792.1">
    <molecule id="Q2TAA2-2"/>
    <property type="nucleotide sequence ID" value="NM_001320863.2"/>
</dbReference>
<dbReference type="RefSeq" id="XP_016859367.1">
    <property type="nucleotide sequence ID" value="XM_017003878.1"/>
</dbReference>
<dbReference type="SMR" id="Q2TAA2"/>
<dbReference type="BioGRID" id="130027">
    <property type="interactions" value="33"/>
</dbReference>
<dbReference type="FunCoup" id="Q2TAA2">
    <property type="interactions" value="1344"/>
</dbReference>
<dbReference type="IntAct" id="Q2TAA2">
    <property type="interactions" value="3"/>
</dbReference>
<dbReference type="STRING" id="9606.ENSP00000417580"/>
<dbReference type="GlyGen" id="Q2TAA2">
    <property type="glycosylation" value="1 site, 1 O-linked glycan (1 site)"/>
</dbReference>
<dbReference type="iPTMnet" id="Q2TAA2"/>
<dbReference type="PhosphoSitePlus" id="Q2TAA2"/>
<dbReference type="BioMuta" id="IAH1"/>
<dbReference type="DMDM" id="121941741"/>
<dbReference type="REPRODUCTION-2DPAGE" id="IPI00419194"/>
<dbReference type="jPOST" id="Q2TAA2"/>
<dbReference type="MassIVE" id="Q2TAA2"/>
<dbReference type="PaxDb" id="9606-ENSP00000417580"/>
<dbReference type="PeptideAtlas" id="Q2TAA2"/>
<dbReference type="ProteomicsDB" id="4645"/>
<dbReference type="ProteomicsDB" id="61453">
    <molecule id="Q2TAA2-1"/>
</dbReference>
<dbReference type="Pumba" id="Q2TAA2"/>
<dbReference type="Antibodypedia" id="47292">
    <property type="antibodies" value="101 antibodies from 24 providers"/>
</dbReference>
<dbReference type="DNASU" id="285148"/>
<dbReference type="Ensembl" id="ENST00000470914.5">
    <molecule id="Q2TAA2-2"/>
    <property type="protein sequence ID" value="ENSP00000419224.1"/>
    <property type="gene ID" value="ENSG00000134330.19"/>
</dbReference>
<dbReference type="Ensembl" id="ENST00000482918.5">
    <molecule id="Q2TAA2-2"/>
    <property type="protein sequence ID" value="ENSP00000419110.1"/>
    <property type="gene ID" value="ENSG00000134330.19"/>
</dbReference>
<dbReference type="Ensembl" id="ENST00000497473.6">
    <molecule id="Q2TAA2-1"/>
    <property type="protein sequence ID" value="ENSP00000417580.1"/>
    <property type="gene ID" value="ENSG00000134330.19"/>
</dbReference>
<dbReference type="GeneID" id="285148"/>
<dbReference type="KEGG" id="hsa:285148"/>
<dbReference type="MANE-Select" id="ENST00000497473.6">
    <property type="protein sequence ID" value="ENSP00000417580.1"/>
    <property type="RefSeq nucleotide sequence ID" value="NM_001039613.3"/>
    <property type="RefSeq protein sequence ID" value="NP_001034702.1"/>
</dbReference>
<dbReference type="UCSC" id="uc002qzr.4">
    <molecule id="Q2TAA2-1"/>
    <property type="organism name" value="human"/>
</dbReference>
<dbReference type="AGR" id="HGNC:27696"/>
<dbReference type="CTD" id="285148"/>
<dbReference type="DisGeNET" id="285148"/>
<dbReference type="GeneCards" id="IAH1"/>
<dbReference type="HGNC" id="HGNC:27696">
    <property type="gene designation" value="IAH1"/>
</dbReference>
<dbReference type="HPA" id="ENSG00000134330">
    <property type="expression patterns" value="Low tissue specificity"/>
</dbReference>
<dbReference type="MalaCards" id="IAH1"/>
<dbReference type="neXtProt" id="NX_Q2TAA2"/>
<dbReference type="OpenTargets" id="ENSG00000134330"/>
<dbReference type="PharmGKB" id="PA162391893"/>
<dbReference type="VEuPathDB" id="HostDB:ENSG00000134330"/>
<dbReference type="eggNOG" id="KOG3035">
    <property type="taxonomic scope" value="Eukaryota"/>
</dbReference>
<dbReference type="GeneTree" id="ENSGT00390000008069"/>
<dbReference type="HOGENOM" id="CLU_152858_0_0_1"/>
<dbReference type="InParanoid" id="Q2TAA2"/>
<dbReference type="OMA" id="VIWPKVI"/>
<dbReference type="OrthoDB" id="671439at2759"/>
<dbReference type="PAN-GO" id="Q2TAA2">
    <property type="GO annotations" value="0 GO annotations based on evolutionary models"/>
</dbReference>
<dbReference type="PhylomeDB" id="Q2TAA2"/>
<dbReference type="TreeFam" id="TF328918"/>
<dbReference type="PathwayCommons" id="Q2TAA2"/>
<dbReference type="SignaLink" id="Q2TAA2"/>
<dbReference type="BioGRID-ORCS" id="285148">
    <property type="hits" value="9 hits in 1148 CRISPR screens"/>
</dbReference>
<dbReference type="ChiTaRS" id="IAH1">
    <property type="organism name" value="human"/>
</dbReference>
<dbReference type="GenomeRNAi" id="285148"/>
<dbReference type="Pharos" id="Q2TAA2">
    <property type="development level" value="Tbio"/>
</dbReference>
<dbReference type="PRO" id="PR:Q2TAA2"/>
<dbReference type="Proteomes" id="UP000005640">
    <property type="component" value="Chromosome 2"/>
</dbReference>
<dbReference type="RNAct" id="Q2TAA2">
    <property type="molecule type" value="protein"/>
</dbReference>
<dbReference type="Bgee" id="ENSG00000134330">
    <property type="expression patterns" value="Expressed in secondary oocyte and 187 other cell types or tissues"/>
</dbReference>
<dbReference type="ExpressionAtlas" id="Q2TAA2">
    <property type="expression patterns" value="baseline and differential"/>
</dbReference>
<dbReference type="GO" id="GO:0016788">
    <property type="term" value="F:hydrolase activity, acting on ester bonds"/>
    <property type="evidence" value="ECO:0007669"/>
    <property type="project" value="InterPro"/>
</dbReference>
<dbReference type="GO" id="GO:0042802">
    <property type="term" value="F:identical protein binding"/>
    <property type="evidence" value="ECO:0000353"/>
    <property type="project" value="IntAct"/>
</dbReference>
<dbReference type="GO" id="GO:0010467">
    <property type="term" value="P:gene expression"/>
    <property type="evidence" value="ECO:0007669"/>
    <property type="project" value="Ensembl"/>
</dbReference>
<dbReference type="GO" id="GO:0016042">
    <property type="term" value="P:lipid catabolic process"/>
    <property type="evidence" value="ECO:0007669"/>
    <property type="project" value="UniProtKB-KW"/>
</dbReference>
<dbReference type="CDD" id="cd01838">
    <property type="entry name" value="Isoamyl_acetate_hydrolase_like"/>
    <property type="match status" value="1"/>
</dbReference>
<dbReference type="FunFam" id="3.40.50.1110:FF:000002">
    <property type="entry name" value="isoamyl acetate-hydrolyzing esterase 1 homolog"/>
    <property type="match status" value="1"/>
</dbReference>
<dbReference type="Gene3D" id="3.40.50.1110">
    <property type="entry name" value="SGNH hydrolase"/>
    <property type="match status" value="1"/>
</dbReference>
<dbReference type="InterPro" id="IPR001087">
    <property type="entry name" value="GDSL"/>
</dbReference>
<dbReference type="InterPro" id="IPR045136">
    <property type="entry name" value="Iah1-like"/>
</dbReference>
<dbReference type="InterPro" id="IPR036514">
    <property type="entry name" value="SGNH_hydro_sf"/>
</dbReference>
<dbReference type="PANTHER" id="PTHR14209">
    <property type="entry name" value="ISOAMYL ACETATE-HYDROLYZING ESTERASE 1"/>
    <property type="match status" value="1"/>
</dbReference>
<dbReference type="PANTHER" id="PTHR14209:SF19">
    <property type="entry name" value="ISOAMYL ACETATE-HYDROLYZING ESTERASE 1 HOMOLOG"/>
    <property type="match status" value="1"/>
</dbReference>
<dbReference type="Pfam" id="PF00657">
    <property type="entry name" value="Lipase_GDSL"/>
    <property type="match status" value="1"/>
</dbReference>
<dbReference type="SUPFAM" id="SSF52266">
    <property type="entry name" value="SGNH hydrolase"/>
    <property type="match status" value="1"/>
</dbReference>
<reference key="1">
    <citation type="journal article" date="2004" name="Nat. Genet.">
        <title>Complete sequencing and characterization of 21,243 full-length human cDNAs.</title>
        <authorList>
            <person name="Ota T."/>
            <person name="Suzuki Y."/>
            <person name="Nishikawa T."/>
            <person name="Otsuki T."/>
            <person name="Sugiyama T."/>
            <person name="Irie R."/>
            <person name="Wakamatsu A."/>
            <person name="Hayashi K."/>
            <person name="Sato H."/>
            <person name="Nagai K."/>
            <person name="Kimura K."/>
            <person name="Makita H."/>
            <person name="Sekine M."/>
            <person name="Obayashi M."/>
            <person name="Nishi T."/>
            <person name="Shibahara T."/>
            <person name="Tanaka T."/>
            <person name="Ishii S."/>
            <person name="Yamamoto J."/>
            <person name="Saito K."/>
            <person name="Kawai Y."/>
            <person name="Isono Y."/>
            <person name="Nakamura Y."/>
            <person name="Nagahari K."/>
            <person name="Murakami K."/>
            <person name="Yasuda T."/>
            <person name="Iwayanagi T."/>
            <person name="Wagatsuma M."/>
            <person name="Shiratori A."/>
            <person name="Sudo H."/>
            <person name="Hosoiri T."/>
            <person name="Kaku Y."/>
            <person name="Kodaira H."/>
            <person name="Kondo H."/>
            <person name="Sugawara M."/>
            <person name="Takahashi M."/>
            <person name="Kanda K."/>
            <person name="Yokoi T."/>
            <person name="Furuya T."/>
            <person name="Kikkawa E."/>
            <person name="Omura Y."/>
            <person name="Abe K."/>
            <person name="Kamihara K."/>
            <person name="Katsuta N."/>
            <person name="Sato K."/>
            <person name="Tanikawa M."/>
            <person name="Yamazaki M."/>
            <person name="Ninomiya K."/>
            <person name="Ishibashi T."/>
            <person name="Yamashita H."/>
            <person name="Murakawa K."/>
            <person name="Fujimori K."/>
            <person name="Tanai H."/>
            <person name="Kimata M."/>
            <person name="Watanabe M."/>
            <person name="Hiraoka S."/>
            <person name="Chiba Y."/>
            <person name="Ishida S."/>
            <person name="Ono Y."/>
            <person name="Takiguchi S."/>
            <person name="Watanabe S."/>
            <person name="Yosida M."/>
            <person name="Hotuta T."/>
            <person name="Kusano J."/>
            <person name="Kanehori K."/>
            <person name="Takahashi-Fujii A."/>
            <person name="Hara H."/>
            <person name="Tanase T.-O."/>
            <person name="Nomura Y."/>
            <person name="Togiya S."/>
            <person name="Komai F."/>
            <person name="Hara R."/>
            <person name="Takeuchi K."/>
            <person name="Arita M."/>
            <person name="Imose N."/>
            <person name="Musashino K."/>
            <person name="Yuuki H."/>
            <person name="Oshima A."/>
            <person name="Sasaki N."/>
            <person name="Aotsuka S."/>
            <person name="Yoshikawa Y."/>
            <person name="Matsunawa H."/>
            <person name="Ichihara T."/>
            <person name="Shiohata N."/>
            <person name="Sano S."/>
            <person name="Moriya S."/>
            <person name="Momiyama H."/>
            <person name="Satoh N."/>
            <person name="Takami S."/>
            <person name="Terashima Y."/>
            <person name="Suzuki O."/>
            <person name="Nakagawa S."/>
            <person name="Senoh A."/>
            <person name="Mizoguchi H."/>
            <person name="Goto Y."/>
            <person name="Shimizu F."/>
            <person name="Wakebe H."/>
            <person name="Hishigaki H."/>
            <person name="Watanabe T."/>
            <person name="Sugiyama A."/>
            <person name="Takemoto M."/>
            <person name="Kawakami B."/>
            <person name="Yamazaki M."/>
            <person name="Watanabe K."/>
            <person name="Kumagai A."/>
            <person name="Itakura S."/>
            <person name="Fukuzumi Y."/>
            <person name="Fujimori Y."/>
            <person name="Komiyama M."/>
            <person name="Tashiro H."/>
            <person name="Tanigami A."/>
            <person name="Fujiwara T."/>
            <person name="Ono T."/>
            <person name="Yamada K."/>
            <person name="Fujii Y."/>
            <person name="Ozaki K."/>
            <person name="Hirao M."/>
            <person name="Ohmori Y."/>
            <person name="Kawabata A."/>
            <person name="Hikiji T."/>
            <person name="Kobatake N."/>
            <person name="Inagaki H."/>
            <person name="Ikema Y."/>
            <person name="Okamoto S."/>
            <person name="Okitani R."/>
            <person name="Kawakami T."/>
            <person name="Noguchi S."/>
            <person name="Itoh T."/>
            <person name="Shigeta K."/>
            <person name="Senba T."/>
            <person name="Matsumura K."/>
            <person name="Nakajima Y."/>
            <person name="Mizuno T."/>
            <person name="Morinaga M."/>
            <person name="Sasaki M."/>
            <person name="Togashi T."/>
            <person name="Oyama M."/>
            <person name="Hata H."/>
            <person name="Watanabe M."/>
            <person name="Komatsu T."/>
            <person name="Mizushima-Sugano J."/>
            <person name="Satoh T."/>
            <person name="Shirai Y."/>
            <person name="Takahashi Y."/>
            <person name="Nakagawa K."/>
            <person name="Okumura K."/>
            <person name="Nagase T."/>
            <person name="Nomura N."/>
            <person name="Kikuchi H."/>
            <person name="Masuho Y."/>
            <person name="Yamashita R."/>
            <person name="Nakai K."/>
            <person name="Yada T."/>
            <person name="Nakamura Y."/>
            <person name="Ohara O."/>
            <person name="Isogai T."/>
            <person name="Sugano S."/>
        </authorList>
    </citation>
    <scope>NUCLEOTIDE SEQUENCE [LARGE SCALE MRNA] (ISOFORMS 1 AND 2)</scope>
    <source>
        <tissue>Brain</tissue>
        <tissue>Small intestine</tissue>
    </source>
</reference>
<reference key="2">
    <citation type="journal article" date="2005" name="Nature">
        <title>Generation and annotation of the DNA sequences of human chromosomes 2 and 4.</title>
        <authorList>
            <person name="Hillier L.W."/>
            <person name="Graves T.A."/>
            <person name="Fulton R.S."/>
            <person name="Fulton L.A."/>
            <person name="Pepin K.H."/>
            <person name="Minx P."/>
            <person name="Wagner-McPherson C."/>
            <person name="Layman D."/>
            <person name="Wylie K."/>
            <person name="Sekhon M."/>
            <person name="Becker M.C."/>
            <person name="Fewell G.A."/>
            <person name="Delehaunty K.D."/>
            <person name="Miner T.L."/>
            <person name="Nash W.E."/>
            <person name="Kremitzki C."/>
            <person name="Oddy L."/>
            <person name="Du H."/>
            <person name="Sun H."/>
            <person name="Bradshaw-Cordum H."/>
            <person name="Ali J."/>
            <person name="Carter J."/>
            <person name="Cordes M."/>
            <person name="Harris A."/>
            <person name="Isak A."/>
            <person name="van Brunt A."/>
            <person name="Nguyen C."/>
            <person name="Du F."/>
            <person name="Courtney L."/>
            <person name="Kalicki J."/>
            <person name="Ozersky P."/>
            <person name="Abbott S."/>
            <person name="Armstrong J."/>
            <person name="Belter E.A."/>
            <person name="Caruso L."/>
            <person name="Cedroni M."/>
            <person name="Cotton M."/>
            <person name="Davidson T."/>
            <person name="Desai A."/>
            <person name="Elliott G."/>
            <person name="Erb T."/>
            <person name="Fronick C."/>
            <person name="Gaige T."/>
            <person name="Haakenson W."/>
            <person name="Haglund K."/>
            <person name="Holmes A."/>
            <person name="Harkins R."/>
            <person name="Kim K."/>
            <person name="Kruchowski S.S."/>
            <person name="Strong C.M."/>
            <person name="Grewal N."/>
            <person name="Goyea E."/>
            <person name="Hou S."/>
            <person name="Levy A."/>
            <person name="Martinka S."/>
            <person name="Mead K."/>
            <person name="McLellan M.D."/>
            <person name="Meyer R."/>
            <person name="Randall-Maher J."/>
            <person name="Tomlinson C."/>
            <person name="Dauphin-Kohlberg S."/>
            <person name="Kozlowicz-Reilly A."/>
            <person name="Shah N."/>
            <person name="Swearengen-Shahid S."/>
            <person name="Snider J."/>
            <person name="Strong J.T."/>
            <person name="Thompson J."/>
            <person name="Yoakum M."/>
            <person name="Leonard S."/>
            <person name="Pearman C."/>
            <person name="Trani L."/>
            <person name="Radionenko M."/>
            <person name="Waligorski J.E."/>
            <person name="Wang C."/>
            <person name="Rock S.M."/>
            <person name="Tin-Wollam A.-M."/>
            <person name="Maupin R."/>
            <person name="Latreille P."/>
            <person name="Wendl M.C."/>
            <person name="Yang S.-P."/>
            <person name="Pohl C."/>
            <person name="Wallis J.W."/>
            <person name="Spieth J."/>
            <person name="Bieri T.A."/>
            <person name="Berkowicz N."/>
            <person name="Nelson J.O."/>
            <person name="Osborne J."/>
            <person name="Ding L."/>
            <person name="Meyer R."/>
            <person name="Sabo A."/>
            <person name="Shotland Y."/>
            <person name="Sinha P."/>
            <person name="Wohldmann P.E."/>
            <person name="Cook L.L."/>
            <person name="Hickenbotham M.T."/>
            <person name="Eldred J."/>
            <person name="Williams D."/>
            <person name="Jones T.A."/>
            <person name="She X."/>
            <person name="Ciccarelli F.D."/>
            <person name="Izaurralde E."/>
            <person name="Taylor J."/>
            <person name="Schmutz J."/>
            <person name="Myers R.M."/>
            <person name="Cox D.R."/>
            <person name="Huang X."/>
            <person name="McPherson J.D."/>
            <person name="Mardis E.R."/>
            <person name="Clifton S.W."/>
            <person name="Warren W.C."/>
            <person name="Chinwalla A.T."/>
            <person name="Eddy S.R."/>
            <person name="Marra M.A."/>
            <person name="Ovcharenko I."/>
            <person name="Furey T.S."/>
            <person name="Miller W."/>
            <person name="Eichler E.E."/>
            <person name="Bork P."/>
            <person name="Suyama M."/>
            <person name="Torrents D."/>
            <person name="Waterston R.H."/>
            <person name="Wilson R.K."/>
        </authorList>
    </citation>
    <scope>NUCLEOTIDE SEQUENCE [LARGE SCALE GENOMIC DNA]</scope>
</reference>
<reference key="3">
    <citation type="submission" date="2005-09" db="EMBL/GenBank/DDBJ databases">
        <authorList>
            <person name="Mural R.J."/>
            <person name="Istrail S."/>
            <person name="Sutton G.G."/>
            <person name="Florea L."/>
            <person name="Halpern A.L."/>
            <person name="Mobarry C.M."/>
            <person name="Lippert R."/>
            <person name="Walenz B."/>
            <person name="Shatkay H."/>
            <person name="Dew I."/>
            <person name="Miller J.R."/>
            <person name="Flanigan M.J."/>
            <person name="Edwards N.J."/>
            <person name="Bolanos R."/>
            <person name="Fasulo D."/>
            <person name="Halldorsson B.V."/>
            <person name="Hannenhalli S."/>
            <person name="Turner R."/>
            <person name="Yooseph S."/>
            <person name="Lu F."/>
            <person name="Nusskern D.R."/>
            <person name="Shue B.C."/>
            <person name="Zheng X.H."/>
            <person name="Zhong F."/>
            <person name="Delcher A.L."/>
            <person name="Huson D.H."/>
            <person name="Kravitz S.A."/>
            <person name="Mouchard L."/>
            <person name="Reinert K."/>
            <person name="Remington K.A."/>
            <person name="Clark A.G."/>
            <person name="Waterman M.S."/>
            <person name="Eichler E.E."/>
            <person name="Adams M.D."/>
            <person name="Hunkapiller M.W."/>
            <person name="Myers E.W."/>
            <person name="Venter J.C."/>
        </authorList>
    </citation>
    <scope>NUCLEOTIDE SEQUENCE [LARGE SCALE GENOMIC DNA]</scope>
</reference>
<reference key="4">
    <citation type="journal article" date="2004" name="Genome Res.">
        <title>The status, quality, and expansion of the NIH full-length cDNA project: the Mammalian Gene Collection (MGC).</title>
        <authorList>
            <consortium name="The MGC Project Team"/>
        </authorList>
    </citation>
    <scope>NUCLEOTIDE SEQUENCE [LARGE SCALE MRNA] (ISOFORM 1)</scope>
    <source>
        <tissue>Brain</tissue>
    </source>
</reference>
<reference key="5">
    <citation type="journal article" date="2011" name="BMC Syst. Biol.">
        <title>Initial characterization of the human central proteome.</title>
        <authorList>
            <person name="Burkard T.R."/>
            <person name="Planyavsky M."/>
            <person name="Kaupe I."/>
            <person name="Breitwieser F.P."/>
            <person name="Buerckstuemmer T."/>
            <person name="Bennett K.L."/>
            <person name="Superti-Furga G."/>
            <person name="Colinge J."/>
        </authorList>
    </citation>
    <scope>IDENTIFICATION BY MASS SPECTROMETRY [LARGE SCALE ANALYSIS]</scope>
</reference>
<reference key="6">
    <citation type="journal article" date="2014" name="J. Proteomics">
        <title>An enzyme assisted RP-RPLC approach for in-depth analysis of human liver phosphoproteome.</title>
        <authorList>
            <person name="Bian Y."/>
            <person name="Song C."/>
            <person name="Cheng K."/>
            <person name="Dong M."/>
            <person name="Wang F."/>
            <person name="Huang J."/>
            <person name="Sun D."/>
            <person name="Wang L."/>
            <person name="Ye M."/>
            <person name="Zou H."/>
        </authorList>
    </citation>
    <scope>IDENTIFICATION BY MASS SPECTROMETRY [LARGE SCALE ANALYSIS]</scope>
    <source>
        <tissue>Liver</tissue>
    </source>
</reference>
<proteinExistence type="evidence at protein level"/>